<dbReference type="EMBL" id="AF503502">
    <property type="protein sequence ID" value="AAM22231.1"/>
    <property type="molecule type" value="mRNA"/>
</dbReference>
<dbReference type="EMBL" id="AC151733">
    <property type="status" value="NOT_ANNOTATED_CDS"/>
    <property type="molecule type" value="Genomic_DNA"/>
</dbReference>
<dbReference type="EMBL" id="CH466654">
    <property type="protein sequence ID" value="EDL42109.1"/>
    <property type="molecule type" value="Genomic_DNA"/>
</dbReference>
<dbReference type="EMBL" id="BC058704">
    <property type="protein sequence ID" value="AAH58704.1"/>
    <property type="molecule type" value="mRNA"/>
</dbReference>
<dbReference type="EMBL" id="BC080277">
    <property type="protein sequence ID" value="AAH80277.1"/>
    <property type="molecule type" value="mRNA"/>
</dbReference>
<dbReference type="EMBL" id="AB080745">
    <property type="protein sequence ID" value="BAB85834.1"/>
    <property type="molecule type" value="mRNA"/>
</dbReference>
<dbReference type="CCDS" id="CCDS20845.1">
    <molecule id="Q8K596-1"/>
</dbReference>
<dbReference type="CCDS" id="CCDS85220.1">
    <molecule id="Q8K596-2"/>
</dbReference>
<dbReference type="RefSeq" id="NP_001334490.1">
    <molecule id="Q8K596-2"/>
    <property type="nucleotide sequence ID" value="NM_001347561.1"/>
</dbReference>
<dbReference type="RefSeq" id="NP_683748.1">
    <molecule id="Q8K596-1"/>
    <property type="nucleotide sequence ID" value="NM_148946.3"/>
</dbReference>
<dbReference type="SMR" id="Q8K596"/>
<dbReference type="FunCoup" id="Q8K596">
    <property type="interactions" value="2156"/>
</dbReference>
<dbReference type="STRING" id="10090.ENSMUSP00000147497"/>
<dbReference type="GlyCosmos" id="Q8K596">
    <property type="glycosylation" value="2 sites, No reported glycans"/>
</dbReference>
<dbReference type="GlyGen" id="Q8K596">
    <property type="glycosylation" value="4 sites, 1 O-linked glycan (1 site)"/>
</dbReference>
<dbReference type="iPTMnet" id="Q8K596"/>
<dbReference type="PhosphoSitePlus" id="Q8K596"/>
<dbReference type="SwissPalm" id="Q8K596"/>
<dbReference type="PaxDb" id="10090-ENSMUSP00000128926"/>
<dbReference type="ProteomicsDB" id="286141">
    <molecule id="Q8K596-1"/>
</dbReference>
<dbReference type="ProteomicsDB" id="286142">
    <molecule id="Q8K596-2"/>
</dbReference>
<dbReference type="Antibodypedia" id="54559">
    <property type="antibodies" value="84 antibodies from 17 providers"/>
</dbReference>
<dbReference type="DNASU" id="110891"/>
<dbReference type="Ensembl" id="ENSMUST00000168693.3">
    <molecule id="Q8K596-2"/>
    <property type="protein sequence ID" value="ENSMUSP00000128926.3"/>
    <property type="gene ID" value="ENSMUSG00000030376.9"/>
</dbReference>
<dbReference type="Ensembl" id="ENSMUST00000211649.2">
    <molecule id="Q8K596-1"/>
    <property type="protein sequence ID" value="ENSMUSP00000147497.2"/>
    <property type="gene ID" value="ENSMUSG00000030376.9"/>
</dbReference>
<dbReference type="GeneID" id="110891"/>
<dbReference type="KEGG" id="mmu:110891"/>
<dbReference type="UCSC" id="uc009fgz.1">
    <molecule id="Q8K596-1"/>
    <property type="organism name" value="mouse"/>
</dbReference>
<dbReference type="UCSC" id="uc012fac.1">
    <property type="organism name" value="mouse"/>
</dbReference>
<dbReference type="AGR" id="MGI:107996"/>
<dbReference type="CTD" id="6543"/>
<dbReference type="MGI" id="MGI:107996">
    <property type="gene designation" value="Slc8a2"/>
</dbReference>
<dbReference type="VEuPathDB" id="HostDB:ENSMUSG00000030376"/>
<dbReference type="eggNOG" id="KOG1306">
    <property type="taxonomic scope" value="Eukaryota"/>
</dbReference>
<dbReference type="GeneTree" id="ENSGT00940000158344"/>
<dbReference type="HOGENOM" id="CLU_012872_1_0_1"/>
<dbReference type="InParanoid" id="Q8K596"/>
<dbReference type="OMA" id="PEDKHQK"/>
<dbReference type="OrthoDB" id="418484at2759"/>
<dbReference type="PhylomeDB" id="Q8K596"/>
<dbReference type="TreeFam" id="TF314308"/>
<dbReference type="Reactome" id="R-MMU-418359">
    <property type="pathway name" value="Reduction of cytosolic Ca++ levels"/>
</dbReference>
<dbReference type="Reactome" id="R-MMU-425561">
    <property type="pathway name" value="Sodium/Calcium exchangers"/>
</dbReference>
<dbReference type="Reactome" id="R-MMU-5578775">
    <property type="pathway name" value="Ion homeostasis"/>
</dbReference>
<dbReference type="BioGRID-ORCS" id="110891">
    <property type="hits" value="3 hits in 76 CRISPR screens"/>
</dbReference>
<dbReference type="CD-CODE" id="CE726F99">
    <property type="entry name" value="Postsynaptic density"/>
</dbReference>
<dbReference type="ChiTaRS" id="Slc8a2">
    <property type="organism name" value="mouse"/>
</dbReference>
<dbReference type="PRO" id="PR:Q8K596"/>
<dbReference type="Proteomes" id="UP000000589">
    <property type="component" value="Chromosome 7"/>
</dbReference>
<dbReference type="RNAct" id="Q8K596">
    <property type="molecule type" value="protein"/>
</dbReference>
<dbReference type="Bgee" id="ENSMUSG00000030376">
    <property type="expression patterns" value="Expressed in dentate gyrus of hippocampal formation granule cell and 43 other cell types or tissues"/>
</dbReference>
<dbReference type="GO" id="GO:0043679">
    <property type="term" value="C:axon terminus"/>
    <property type="evidence" value="ECO:0000315"/>
    <property type="project" value="ARUK-UCL"/>
</dbReference>
<dbReference type="GO" id="GO:0016323">
    <property type="term" value="C:basolateral plasma membrane"/>
    <property type="evidence" value="ECO:0007669"/>
    <property type="project" value="UniProtKB-SubCell"/>
</dbReference>
<dbReference type="GO" id="GO:0005886">
    <property type="term" value="C:plasma membrane"/>
    <property type="evidence" value="ECO:0000315"/>
    <property type="project" value="UniProtKB"/>
</dbReference>
<dbReference type="GO" id="GO:0014069">
    <property type="term" value="C:postsynaptic density"/>
    <property type="evidence" value="ECO:0000315"/>
    <property type="project" value="ARUK-UCL"/>
</dbReference>
<dbReference type="GO" id="GO:0045202">
    <property type="term" value="C:synapse"/>
    <property type="evidence" value="ECO:0000314"/>
    <property type="project" value="ARUK-UCL"/>
</dbReference>
<dbReference type="GO" id="GO:0015085">
    <property type="term" value="F:calcium ion transmembrane transporter activity"/>
    <property type="evidence" value="ECO:0000315"/>
    <property type="project" value="ARUK-UCL"/>
</dbReference>
<dbReference type="GO" id="GO:0005432">
    <property type="term" value="F:calcium:sodium antiporter activity"/>
    <property type="evidence" value="ECO:0000315"/>
    <property type="project" value="UniProtKB"/>
</dbReference>
<dbReference type="GO" id="GO:0005516">
    <property type="term" value="F:calmodulin binding"/>
    <property type="evidence" value="ECO:0007669"/>
    <property type="project" value="UniProtKB-KW"/>
</dbReference>
<dbReference type="GO" id="GO:0046872">
    <property type="term" value="F:metal ion binding"/>
    <property type="evidence" value="ECO:0007669"/>
    <property type="project" value="UniProtKB-KW"/>
</dbReference>
<dbReference type="GO" id="GO:1990034">
    <property type="term" value="P:calcium ion export across plasma membrane"/>
    <property type="evidence" value="ECO:0000315"/>
    <property type="project" value="ARUK-UCL"/>
</dbReference>
<dbReference type="GO" id="GO:0070588">
    <property type="term" value="P:calcium ion transmembrane transport"/>
    <property type="evidence" value="ECO:0000315"/>
    <property type="project" value="UniProtKB"/>
</dbReference>
<dbReference type="GO" id="GO:0007154">
    <property type="term" value="P:cell communication"/>
    <property type="evidence" value="ECO:0007669"/>
    <property type="project" value="InterPro"/>
</dbReference>
<dbReference type="GO" id="GO:0050890">
    <property type="term" value="P:cognition"/>
    <property type="evidence" value="ECO:0000315"/>
    <property type="project" value="ARUK-UCL"/>
</dbReference>
<dbReference type="GO" id="GO:0006874">
    <property type="term" value="P:intracellular calcium ion homeostasis"/>
    <property type="evidence" value="ECO:0000315"/>
    <property type="project" value="UniProtKB"/>
</dbReference>
<dbReference type="GO" id="GO:0007612">
    <property type="term" value="P:learning"/>
    <property type="evidence" value="ECO:0000315"/>
    <property type="project" value="UniProtKB"/>
</dbReference>
<dbReference type="GO" id="GO:0007611">
    <property type="term" value="P:learning or memory"/>
    <property type="evidence" value="ECO:0000315"/>
    <property type="project" value="ARUK-UCL"/>
</dbReference>
<dbReference type="GO" id="GO:0060291">
    <property type="term" value="P:long-term synaptic potentiation"/>
    <property type="evidence" value="ECO:0000315"/>
    <property type="project" value="UniProtKB"/>
</dbReference>
<dbReference type="GO" id="GO:0007613">
    <property type="term" value="P:memory"/>
    <property type="evidence" value="ECO:0000315"/>
    <property type="project" value="UniProtKB"/>
</dbReference>
<dbReference type="GO" id="GO:0098815">
    <property type="term" value="P:modulation of excitatory postsynaptic potential"/>
    <property type="evidence" value="ECO:0000315"/>
    <property type="project" value="ARUK-UCL"/>
</dbReference>
<dbReference type="GO" id="GO:0070050">
    <property type="term" value="P:neuron cellular homeostasis"/>
    <property type="evidence" value="ECO:0000315"/>
    <property type="project" value="ARUK-UCL"/>
</dbReference>
<dbReference type="GO" id="GO:1902533">
    <property type="term" value="P:positive regulation of intracellular signal transduction"/>
    <property type="evidence" value="ECO:0000315"/>
    <property type="project" value="ARUK-UCL"/>
</dbReference>
<dbReference type="GO" id="GO:0099608">
    <property type="term" value="P:regulation of action potential firing pattern"/>
    <property type="evidence" value="ECO:0000315"/>
    <property type="project" value="ARUK-UCL"/>
</dbReference>
<dbReference type="GO" id="GO:0106056">
    <property type="term" value="P:regulation of calcineurin-mediated signaling"/>
    <property type="evidence" value="ECO:0000315"/>
    <property type="project" value="ARUK-UCL"/>
</dbReference>
<dbReference type="GO" id="GO:0051480">
    <property type="term" value="P:regulation of cytosolic calcium ion concentration"/>
    <property type="evidence" value="ECO:0000315"/>
    <property type="project" value="ARUK-UCL"/>
</dbReference>
<dbReference type="GO" id="GO:0010468">
    <property type="term" value="P:regulation of gene expression"/>
    <property type="evidence" value="ECO:0000315"/>
    <property type="project" value="ARUK-UCL"/>
</dbReference>
<dbReference type="GO" id="GO:0048172">
    <property type="term" value="P:regulation of short-term neuronal synaptic plasticity"/>
    <property type="evidence" value="ECO:0000315"/>
    <property type="project" value="UniProtKB"/>
</dbReference>
<dbReference type="GO" id="GO:0002931">
    <property type="term" value="P:response to ischemia"/>
    <property type="evidence" value="ECO:0000315"/>
    <property type="project" value="ARUK-UCL"/>
</dbReference>
<dbReference type="GO" id="GO:0035725">
    <property type="term" value="P:sodium ion transmembrane transport"/>
    <property type="evidence" value="ECO:0000315"/>
    <property type="project" value="UniProtKB"/>
</dbReference>
<dbReference type="GO" id="GO:0050808">
    <property type="term" value="P:synapse organization"/>
    <property type="evidence" value="ECO:0000315"/>
    <property type="project" value="ARUK-UCL"/>
</dbReference>
<dbReference type="FunFam" id="1.20.1420.30:FF:000001">
    <property type="entry name" value="sodium/calcium exchanger 1 isoform X1"/>
    <property type="match status" value="1"/>
</dbReference>
<dbReference type="FunFam" id="1.20.1420.30:FF:000003">
    <property type="entry name" value="sodium/calcium exchanger 1 isoform X1"/>
    <property type="match status" value="1"/>
</dbReference>
<dbReference type="FunFam" id="2.60.40.2030:FF:000001">
    <property type="entry name" value="sodium/calcium exchanger 1 isoform X1"/>
    <property type="match status" value="1"/>
</dbReference>
<dbReference type="FunFam" id="2.60.40.2030:FF:000002">
    <property type="entry name" value="sodium/calcium exchanger 3 isoform X1"/>
    <property type="match status" value="1"/>
</dbReference>
<dbReference type="Gene3D" id="2.60.40.2030">
    <property type="match status" value="2"/>
</dbReference>
<dbReference type="Gene3D" id="1.20.1420.30">
    <property type="entry name" value="NCX, central ion-binding region"/>
    <property type="match status" value="2"/>
</dbReference>
<dbReference type="InterPro" id="IPR051171">
    <property type="entry name" value="CaCA"/>
</dbReference>
<dbReference type="InterPro" id="IPR038081">
    <property type="entry name" value="CalX-like_sf"/>
</dbReference>
<dbReference type="InterPro" id="IPR003644">
    <property type="entry name" value="Calx_beta"/>
</dbReference>
<dbReference type="InterPro" id="IPR004836">
    <property type="entry name" value="Na_Ca_Ex"/>
</dbReference>
<dbReference type="InterPro" id="IPR032452">
    <property type="entry name" value="Na_Ca_Ex_C-exten"/>
</dbReference>
<dbReference type="InterPro" id="IPR004837">
    <property type="entry name" value="NaCa_Exmemb"/>
</dbReference>
<dbReference type="InterPro" id="IPR044880">
    <property type="entry name" value="NCX_ion-bd_dom_sf"/>
</dbReference>
<dbReference type="NCBIfam" id="TIGR00845">
    <property type="entry name" value="caca"/>
    <property type="match status" value="1"/>
</dbReference>
<dbReference type="PANTHER" id="PTHR11878">
    <property type="entry name" value="SODIUM/CALCIUM EXCHANGER"/>
    <property type="match status" value="1"/>
</dbReference>
<dbReference type="PANTHER" id="PTHR11878:SF8">
    <property type="entry name" value="SODIUM_CALCIUM EXCHANGER 2"/>
    <property type="match status" value="1"/>
</dbReference>
<dbReference type="Pfam" id="PF03160">
    <property type="entry name" value="Calx-beta"/>
    <property type="match status" value="1"/>
</dbReference>
<dbReference type="Pfam" id="PF01699">
    <property type="entry name" value="Na_Ca_ex"/>
    <property type="match status" value="2"/>
</dbReference>
<dbReference type="Pfam" id="PF16494">
    <property type="entry name" value="Na_Ca_ex_C"/>
    <property type="match status" value="1"/>
</dbReference>
<dbReference type="PRINTS" id="PR01259">
    <property type="entry name" value="NACAEXCHNGR"/>
</dbReference>
<dbReference type="SMART" id="SM00237">
    <property type="entry name" value="Calx_beta"/>
    <property type="match status" value="2"/>
</dbReference>
<dbReference type="SUPFAM" id="SSF141072">
    <property type="entry name" value="CalX-like"/>
    <property type="match status" value="2"/>
</dbReference>
<comment type="function">
    <text evidence="5">Mediates the electrogenic exchange of Ca(2+) against Na(+) ions across the cell membrane, and thereby contributes to the regulation of cytoplasmic Ca(2+) levels and Ca(2+)-dependent cellular processes (PubMed:12818181). Contributes to cellular Ca(2+) homeostasis in excitable cells (PubMed:12818181). Contributes to the rapid decrease of cytoplasmic Ca(2+) levels back to baseline after neuronal activation, and thereby contributes to modulate synaptic plasticity, learning and memory (PubMed:12818181). Plays a role in regulating urinary Ca(2+) and Na(+) excretion (PubMed:25498502).</text>
</comment>
<comment type="catalytic activity">
    <reaction evidence="2">
        <text>Ca(2+)(in) + 3 Na(+)(out) = Ca(2+)(out) + 3 Na(+)(in)</text>
        <dbReference type="Rhea" id="RHEA:69955"/>
        <dbReference type="ChEBI" id="CHEBI:29101"/>
        <dbReference type="ChEBI" id="CHEBI:29108"/>
    </reaction>
</comment>
<comment type="activity regulation">
    <text evidence="2">Calcium transport is down-regulated by Na(+) and stimulated by Ca(2+).</text>
</comment>
<comment type="subcellular location">
    <subcellularLocation>
        <location evidence="5">Cell membrane</location>
        <topology evidence="8">Multi-pass membrane protein</topology>
    </subcellularLocation>
    <subcellularLocation>
        <location evidence="6">Basolateral cell membrane</location>
        <topology evidence="8">Multi-pass membrane protein</topology>
    </subcellularLocation>
</comment>
<comment type="alternative products">
    <event type="alternative splicing"/>
    <isoform>
        <id>Q8K596-1</id>
        <name>1</name>
        <sequence type="displayed"/>
    </isoform>
    <isoform>
        <id>Q8K596-2</id>
        <name>2</name>
        <sequence type="described" ref="VSP_057980"/>
    </isoform>
</comment>
<comment type="tissue specificity">
    <text evidence="5 6">Detected in kidney cortex, in distal convoluted tubules and connecting segments (PubMed:25498502). Detected in brain and spinal cord (at protein level) (PubMed:12818181). Detected in brain, especially in hippocampus CA1, CA2 and CA3 fiels, dentate gyrus, cerebellum and brain cortex (PubMed:12818181).</text>
</comment>
<comment type="domain">
    <text evidence="1">The cytoplasmic Calx-beta domains bind the regulatory Ca(2+). The first Calx-beta domain can bind up to four Ca(2+) ions. The second domain can bind another two Ca(2+) ions that are essential for calcium-regulated ion exchange.</text>
</comment>
<comment type="disruption phenotype">
    <text evidence="5 6">No obvious phenotype. In hippocampus pyramidal neurons, calcium exchange activity is reduced by about half, suggesting that other, additional calcium exchangers are active in these neurons. In these neurons, the neurotransmitter glutamate triggers a sharp increase in cellular Ca(2+) that does not depend on calcium exchanger activity. In contrast, the decrease to basal levels is mediated by calcium exchangers, and is considerably slower in mutant mice than in wild-type. Basal synaptic function is not impaired in mutant mice, but they display enhanced short-term plasticity and facilitated long-term potentiation, probably due to the slower decrease of Ca(2+) after an initial impulse. Mutant mice display an increased capacity for spatial learning and memory (PubMed:12818181). Heterozygous mutants show increased basal urine volume and increased urinary secretion of Ca(2+) and Na(+) (PubMed:25498502).</text>
</comment>
<comment type="similarity">
    <text evidence="8">Belongs to the Ca(2+):cation antiporter (CaCA) (TC 2.A.19) family. SLC8 subfamily.</text>
</comment>
<organism>
    <name type="scientific">Mus musculus</name>
    <name type="common">Mouse</name>
    <dbReference type="NCBI Taxonomy" id="10090"/>
    <lineage>
        <taxon>Eukaryota</taxon>
        <taxon>Metazoa</taxon>
        <taxon>Chordata</taxon>
        <taxon>Craniata</taxon>
        <taxon>Vertebrata</taxon>
        <taxon>Euteleostomi</taxon>
        <taxon>Mammalia</taxon>
        <taxon>Eutheria</taxon>
        <taxon>Euarchontoglires</taxon>
        <taxon>Glires</taxon>
        <taxon>Rodentia</taxon>
        <taxon>Myomorpha</taxon>
        <taxon>Muroidea</taxon>
        <taxon>Muridae</taxon>
        <taxon>Murinae</taxon>
        <taxon>Mus</taxon>
        <taxon>Mus</taxon>
    </lineage>
</organism>
<sequence>MAPLALMGVVLLLGVPHCLGEATPTPSLPPPTANDSDASPEGCQGSYRCQPGVLLPVWEPEDPSLGDKVARAVVYFVAMVYMFLGVSIIADRFMASIEVITSKEKEITITKANGETSVGTVRIWNETVSNLTLMALGSSAPEILLTVIEVCGHNFQAGELGPGTIVGSAAFNMFVVIAVCVYVIPAGESRKIKHLRVFFVTASWSIFAYVWLYLILAVFSPGVVQVWEALLTLIFFPVCVVFAWMADKRLLFYKYVYKRYRTDPRSGIIIGAEGDPPKSIELDGTFVGTEVPGELGALGTGPAEARELDASRREVIQILKDLKQKHPDKDLEQLMGIAKYYALLHQQKSRAFYRIQATRLMTGAGNVLRRHAADAARRPGATDGAPDDEDDGASRIFFEPSLYHCLENCGSVLLSVACQGGEGNSTFYVDYRTEDGSAKAGSDYEYSEGTLVFKPGETQKDLRIGIIDDDIFEEDEHFFVRLLNLRVGDAQGMFEPDGGGRPKGRLVAPLLATVTILDDDHAGIFSFQDRLLHVSECMGTVDVRVVRSSGARGTVRLPYRTVDGTARGGGVHYEDACGELEFGDDETMKTLQVKIVDDEEYEKKDNFFIELGQPQWLKRGISALLLNQGNGDKKITAEQEEAQRIAEMGKPVLGENNRLEVIIEESYDFKNTVDKLIKKTNLALVIGTHSWREQFIEAVTVSAGDEEEDEDGPREERLPSCFDYVMHFLTVFWKVLFACVPPTEYCNGWACFGVCILVIGVLTALIGDLASHFGCTVGLKDSVNAVVFVALGTSIPDTFASKVAALQDQCADASIGNVTGSNAVNVFLGLGVAWSVAAVYWAVQGRPFEVRAGTLAFSVTLFTVFAFVCIAVLLYRRRPQIGGELGGPRGPKLATTALFLGLWFLYILFSSLEAYCHIRGF</sequence>
<accession>Q8K596</accession>
<accession>Q68EG0</accession>
<accession>Q8R504</accession>
<reference evidence="9" key="1">
    <citation type="submission" date="2002-04" db="EMBL/GenBank/DDBJ databases">
        <title>Towards a complete inventory of calcium transporters of the house mouse.</title>
        <authorList>
            <person name="Kraev A."/>
        </authorList>
    </citation>
    <scope>NUCLEOTIDE SEQUENCE [MRNA] (ISOFORM 1)</scope>
    <source>
        <tissue evidence="9">Cerebellum</tissue>
    </source>
</reference>
<reference key="2">
    <citation type="journal article" date="2009" name="PLoS Biol.">
        <title>Lineage-specific biology revealed by a finished genome assembly of the mouse.</title>
        <authorList>
            <person name="Church D.M."/>
            <person name="Goodstadt L."/>
            <person name="Hillier L.W."/>
            <person name="Zody M.C."/>
            <person name="Goldstein S."/>
            <person name="She X."/>
            <person name="Bult C.J."/>
            <person name="Agarwala R."/>
            <person name="Cherry J.L."/>
            <person name="DiCuccio M."/>
            <person name="Hlavina W."/>
            <person name="Kapustin Y."/>
            <person name="Meric P."/>
            <person name="Maglott D."/>
            <person name="Birtle Z."/>
            <person name="Marques A.C."/>
            <person name="Graves T."/>
            <person name="Zhou S."/>
            <person name="Teague B."/>
            <person name="Potamousis K."/>
            <person name="Churas C."/>
            <person name="Place M."/>
            <person name="Herschleb J."/>
            <person name="Runnheim R."/>
            <person name="Forrest D."/>
            <person name="Amos-Landgraf J."/>
            <person name="Schwartz D.C."/>
            <person name="Cheng Z."/>
            <person name="Lindblad-Toh K."/>
            <person name="Eichler E.E."/>
            <person name="Ponting C.P."/>
        </authorList>
    </citation>
    <scope>NUCLEOTIDE SEQUENCE [LARGE SCALE GENOMIC DNA]</scope>
    <source>
        <strain>C57BL/6J</strain>
    </source>
</reference>
<reference key="3">
    <citation type="submission" date="2005-09" db="EMBL/GenBank/DDBJ databases">
        <authorList>
            <person name="Mural R.J."/>
            <person name="Adams M.D."/>
            <person name="Myers E.W."/>
            <person name="Smith H.O."/>
            <person name="Venter J.C."/>
        </authorList>
    </citation>
    <scope>NUCLEOTIDE SEQUENCE [LARGE SCALE GENOMIC DNA]</scope>
</reference>
<reference key="4">
    <citation type="journal article" date="2004" name="Genome Res.">
        <title>The status, quality, and expansion of the NIH full-length cDNA project: the Mammalian Gene Collection (MGC).</title>
        <authorList>
            <consortium name="The MGC Project Team"/>
        </authorList>
    </citation>
    <scope>NUCLEOTIDE SEQUENCE [LARGE SCALE MRNA] (ISOFORMS 1 AND 2)</scope>
    <source>
        <strain>C57BL/6J</strain>
        <tissue>Brain</tissue>
    </source>
</reference>
<reference key="5">
    <citation type="journal article" date="2003" name="Biochim. Biophys. Acta">
        <title>Hypoxia up-regulates glyceraldehyde-3-phosphate dehydrogenase in mouse brain capillary endothelial cells: involvement of Na+/Ca2+ exchanger.</title>
        <authorList>
            <person name="Yamaji R."/>
            <person name="Fujita K."/>
            <person name="Takahashi S."/>
            <person name="Yoneda H."/>
            <person name="Nagao K."/>
            <person name="Masuda W."/>
            <person name="Naito M."/>
            <person name="Tsuruo T."/>
            <person name="Miyatake K."/>
            <person name="Inui H."/>
            <person name="Nakano Y."/>
        </authorList>
    </citation>
    <scope>NUCLEOTIDE SEQUENCE [MRNA] OF 230-400</scope>
    <source>
        <strain evidence="10">BALB/cJ</strain>
        <tissue evidence="10">Brain capillary</tissue>
    </source>
</reference>
<reference key="6">
    <citation type="journal article" date="2003" name="Neuron">
        <title>Enhanced learning and memory in mice lacking Na+/Ca2+ exchanger 2.</title>
        <authorList>
            <person name="Jeon D."/>
            <person name="Yang Y.M."/>
            <person name="Jeong M.J."/>
            <person name="Philipson K.D."/>
            <person name="Rhim H."/>
            <person name="Shin H.S."/>
        </authorList>
    </citation>
    <scope>DISRUPTION PHENOTYPE</scope>
    <scope>FUNCTION</scope>
    <scope>SUBCELLULAR LOCATION</scope>
    <scope>TISSUE SPECIFICITY</scope>
</reference>
<reference key="7">
    <citation type="journal article" date="2010" name="Cell">
        <title>A tissue-specific atlas of mouse protein phosphorylation and expression.</title>
        <authorList>
            <person name="Huttlin E.L."/>
            <person name="Jedrychowski M.P."/>
            <person name="Elias J.E."/>
            <person name="Goswami T."/>
            <person name="Rad R."/>
            <person name="Beausoleil S.A."/>
            <person name="Villen J."/>
            <person name="Haas W."/>
            <person name="Sowa M.E."/>
            <person name="Gygi S.P."/>
        </authorList>
    </citation>
    <scope>PHOSPHORYLATION [LARGE SCALE ANALYSIS] AT SER-622</scope>
    <scope>IDENTIFICATION BY MASS SPECTROMETRY [LARGE SCALE ANALYSIS]</scope>
    <source>
        <tissue>Brain</tissue>
        <tissue>Testis</tissue>
    </source>
</reference>
<reference key="8">
    <citation type="journal article" date="2013" name="Mol. Aspects Med.">
        <title>The SLC8 gene family of sodium-calcium exchangers (NCX) - structure, function, and regulation in health and disease.</title>
        <authorList>
            <person name="Khananshvili D."/>
        </authorList>
    </citation>
    <scope>REVIEW</scope>
</reference>
<reference key="9">
    <citation type="journal article" date="2015" name="Biochem. Biophys. Res. Commun.">
        <title>Genetic knockout and pharmacologic inhibition of NCX2 cause natriuresis and hypercalciuria.</title>
        <authorList>
            <person name="Gotoh Y."/>
            <person name="Kita S."/>
            <person name="Fujii M."/>
            <person name="Tagashira H."/>
            <person name="Horie I."/>
            <person name="Arai Y."/>
            <person name="Uchida S."/>
            <person name="Iwamoto T."/>
        </authorList>
    </citation>
    <scope>DISRUPTION PHENOTYPE</scope>
    <scope>FUNCTION</scope>
    <scope>SUBCELLULAR LOCATION</scope>
    <scope>TISSUE SPECIFICITY</scope>
</reference>
<evidence type="ECO:0000250" key="1">
    <source>
        <dbReference type="UniProtKB" id="P23685"/>
    </source>
</evidence>
<evidence type="ECO:0000250" key="2">
    <source>
        <dbReference type="UniProtKB" id="P48768"/>
    </source>
</evidence>
<evidence type="ECO:0000255" key="3"/>
<evidence type="ECO:0000256" key="4">
    <source>
        <dbReference type="SAM" id="MobiDB-lite"/>
    </source>
</evidence>
<evidence type="ECO:0000269" key="5">
    <source>
    </source>
</evidence>
<evidence type="ECO:0000269" key="6">
    <source>
    </source>
</evidence>
<evidence type="ECO:0000303" key="7">
    <source>
    </source>
</evidence>
<evidence type="ECO:0000305" key="8"/>
<evidence type="ECO:0000312" key="9">
    <source>
        <dbReference type="EMBL" id="AAM22231.1"/>
    </source>
</evidence>
<evidence type="ECO:0000312" key="10">
    <source>
        <dbReference type="EMBL" id="BAB85834.1"/>
    </source>
</evidence>
<evidence type="ECO:0000312" key="11">
    <source>
        <dbReference type="MGI" id="MGI:107996"/>
    </source>
</evidence>
<evidence type="ECO:0007744" key="12">
    <source>
    </source>
</evidence>
<feature type="signal peptide" evidence="3">
    <location>
        <begin position="1"/>
        <end position="20"/>
    </location>
</feature>
<feature type="chain" id="PRO_0000434796" description="Sodium/calcium exchanger 2">
    <location>
        <begin position="21"/>
        <end position="921"/>
    </location>
</feature>
<feature type="transmembrane region" description="Helical" evidence="3">
    <location>
        <begin position="69"/>
        <end position="89"/>
    </location>
</feature>
<feature type="transmembrane region" description="Helical" evidence="3">
    <location>
        <begin position="131"/>
        <end position="151"/>
    </location>
</feature>
<feature type="transmembrane region" description="Helical" evidence="3">
    <location>
        <begin position="165"/>
        <end position="185"/>
    </location>
</feature>
<feature type="transmembrane region" description="Helical" evidence="3">
    <location>
        <begin position="197"/>
        <end position="217"/>
    </location>
</feature>
<feature type="transmembrane region" description="Helical" evidence="3">
    <location>
        <begin position="226"/>
        <end position="246"/>
    </location>
</feature>
<feature type="transmembrane region" description="Helical" evidence="3">
    <location>
        <begin position="721"/>
        <end position="741"/>
    </location>
</feature>
<feature type="transmembrane region" description="Helical" evidence="3">
    <location>
        <begin position="749"/>
        <end position="769"/>
    </location>
</feature>
<feature type="transmembrane region" description="Helical" evidence="3">
    <location>
        <begin position="786"/>
        <end position="806"/>
    </location>
</feature>
<feature type="transmembrane region" description="Helical" evidence="3">
    <location>
        <begin position="823"/>
        <end position="843"/>
    </location>
</feature>
<feature type="transmembrane region" description="Helical" evidence="3">
    <location>
        <begin position="855"/>
        <end position="875"/>
    </location>
</feature>
<feature type="transmembrane region" description="Helical" evidence="3">
    <location>
        <begin position="893"/>
        <end position="913"/>
    </location>
</feature>
<feature type="domain" description="Calx-beta 1" evidence="3">
    <location>
        <begin position="389"/>
        <end position="482"/>
    </location>
</feature>
<feature type="domain" description="Calx-beta 2" evidence="3">
    <location>
        <begin position="512"/>
        <end position="611"/>
    </location>
</feature>
<feature type="region of interest" description="Disordered" evidence="4">
    <location>
        <begin position="23"/>
        <end position="42"/>
    </location>
</feature>
<feature type="region of interest" description="Putative calmodulin-binding region" evidence="1">
    <location>
        <begin position="248"/>
        <end position="267"/>
    </location>
</feature>
<feature type="region of interest" description="Disordered" evidence="4">
    <location>
        <begin position="371"/>
        <end position="391"/>
    </location>
</feature>
<feature type="binding site" evidence="1">
    <location>
        <position position="407"/>
    </location>
    <ligand>
        <name>Ca(2+)</name>
        <dbReference type="ChEBI" id="CHEBI:29108"/>
        <label>1</label>
    </ligand>
</feature>
<feature type="binding site" evidence="1">
    <location>
        <position position="407"/>
    </location>
    <ligand>
        <name>Ca(2+)</name>
        <dbReference type="ChEBI" id="CHEBI:29108"/>
        <label>2</label>
    </ligand>
</feature>
<feature type="binding site" evidence="1">
    <location>
        <position position="407"/>
    </location>
    <ligand>
        <name>Ca(2+)</name>
        <dbReference type="ChEBI" id="CHEBI:29108"/>
        <label>3</label>
    </ligand>
</feature>
<feature type="binding site" evidence="1">
    <location>
        <position position="443"/>
    </location>
    <ligand>
        <name>Ca(2+)</name>
        <dbReference type="ChEBI" id="CHEBI:29108"/>
        <label>1</label>
    </ligand>
</feature>
<feature type="binding site" evidence="1">
    <location>
        <position position="443"/>
    </location>
    <ligand>
        <name>Ca(2+)</name>
        <dbReference type="ChEBI" id="CHEBI:29108"/>
        <label>4</label>
    </ligand>
</feature>
<feature type="binding site" evidence="1">
    <location>
        <position position="468"/>
    </location>
    <ligand>
        <name>Ca(2+)</name>
        <dbReference type="ChEBI" id="CHEBI:29108"/>
        <label>2</label>
    </ligand>
</feature>
<feature type="binding site" evidence="1">
    <location>
        <position position="469"/>
    </location>
    <ligand>
        <name>Ca(2+)</name>
        <dbReference type="ChEBI" id="CHEBI:29108"/>
        <label>1</label>
    </ligand>
</feature>
<feature type="binding site" evidence="1">
    <location>
        <position position="469"/>
    </location>
    <ligand>
        <name>Ca(2+)</name>
        <dbReference type="ChEBI" id="CHEBI:29108"/>
        <label>2</label>
    </ligand>
</feature>
<feature type="binding site" evidence="1">
    <location>
        <position position="469"/>
    </location>
    <ligand>
        <name>Ca(2+)</name>
        <dbReference type="ChEBI" id="CHEBI:29108"/>
        <label>3</label>
    </ligand>
</feature>
<feature type="binding site" evidence="1">
    <location>
        <position position="469"/>
    </location>
    <ligand>
        <name>Ca(2+)</name>
        <dbReference type="ChEBI" id="CHEBI:29108"/>
        <label>4</label>
    </ligand>
</feature>
<feature type="binding site" evidence="1">
    <location>
        <position position="471"/>
    </location>
    <ligand>
        <name>Ca(2+)</name>
        <dbReference type="ChEBI" id="CHEBI:29108"/>
        <label>3</label>
    </ligand>
</feature>
<feature type="binding site" evidence="1">
    <location>
        <position position="473"/>
    </location>
    <ligand>
        <name>Ca(2+)</name>
        <dbReference type="ChEBI" id="CHEBI:29108"/>
        <label>1</label>
    </ligand>
</feature>
<feature type="binding site" evidence="1">
    <location>
        <position position="473"/>
    </location>
    <ligand>
        <name>Ca(2+)</name>
        <dbReference type="ChEBI" id="CHEBI:29108"/>
        <label>3</label>
    </ligand>
</feature>
<feature type="binding site" evidence="1">
    <location>
        <position position="473"/>
    </location>
    <ligand>
        <name>Ca(2+)</name>
        <dbReference type="ChEBI" id="CHEBI:29108"/>
        <label>4</label>
    </ligand>
</feature>
<feature type="binding site" evidence="1">
    <location>
        <position position="476"/>
    </location>
    <ligand>
        <name>Ca(2+)</name>
        <dbReference type="ChEBI" id="CHEBI:29108"/>
        <label>4</label>
    </ligand>
</feature>
<feature type="binding site" evidence="1">
    <location>
        <position position="518"/>
    </location>
    <ligand>
        <name>Ca(2+)</name>
        <dbReference type="ChEBI" id="CHEBI:29108"/>
        <label>3</label>
    </ligand>
</feature>
<feature type="binding site" evidence="1">
    <location>
        <position position="519"/>
    </location>
    <ligand>
        <name>Ca(2+)</name>
        <dbReference type="ChEBI" id="CHEBI:29108"/>
        <label>2</label>
    </ligand>
</feature>
<feature type="binding site" evidence="1">
    <location>
        <position position="520"/>
    </location>
    <ligand>
        <name>Ca(2+)</name>
        <dbReference type="ChEBI" id="CHEBI:29108"/>
        <label>2</label>
    </ligand>
</feature>
<feature type="binding site" evidence="1">
    <location>
        <position position="520"/>
    </location>
    <ligand>
        <name>Ca(2+)</name>
        <dbReference type="ChEBI" id="CHEBI:29108"/>
        <label>3</label>
    </ligand>
</feature>
<feature type="binding site" evidence="1">
    <location>
        <position position="536"/>
    </location>
    <ligand>
        <name>Ca(2+)</name>
        <dbReference type="ChEBI" id="CHEBI:29108"/>
        <label>5</label>
    </ligand>
</feature>
<feature type="binding site" evidence="1">
    <location>
        <position position="598"/>
    </location>
    <ligand>
        <name>Ca(2+)</name>
        <dbReference type="ChEBI" id="CHEBI:29108"/>
        <label>5</label>
    </ligand>
</feature>
<feature type="binding site" evidence="1">
    <location>
        <position position="598"/>
    </location>
    <ligand>
        <name>Ca(2+)</name>
        <dbReference type="ChEBI" id="CHEBI:29108"/>
        <label>6</label>
    </ligand>
</feature>
<feature type="binding site" evidence="1">
    <location>
        <position position="599"/>
    </location>
    <ligand>
        <name>Ca(2+)</name>
        <dbReference type="ChEBI" id="CHEBI:29108"/>
        <label>6</label>
    </ligand>
</feature>
<feature type="binding site" evidence="1">
    <location>
        <position position="600"/>
    </location>
    <ligand>
        <name>Ca(2+)</name>
        <dbReference type="ChEBI" id="CHEBI:29108"/>
        <label>5</label>
    </ligand>
</feature>
<feature type="binding site" evidence="1">
    <location>
        <position position="600"/>
    </location>
    <ligand>
        <name>Ca(2+)</name>
        <dbReference type="ChEBI" id="CHEBI:29108"/>
        <label>6</label>
    </ligand>
</feature>
<feature type="binding site" evidence="1">
    <location>
        <position position="665"/>
    </location>
    <ligand>
        <name>Ca(2+)</name>
        <dbReference type="ChEBI" id="CHEBI:29108"/>
        <label>5</label>
    </ligand>
</feature>
<feature type="modified residue" description="Phosphoserine" evidence="12">
    <location>
        <position position="622"/>
    </location>
</feature>
<feature type="glycosylation site" description="N-linked (GlcNAc...) asparagine" evidence="3">
    <location>
        <position position="125"/>
    </location>
</feature>
<feature type="glycosylation site" description="N-linked (GlcNAc...) asparagine" evidence="3">
    <location>
        <position position="130"/>
    </location>
</feature>
<feature type="splice variant" id="VSP_057980" description="In isoform 2.">
    <location>
        <begin position="623"/>
        <end position="628"/>
    </location>
</feature>
<feature type="sequence conflict" description="In Ref. 5; BAB85834." evidence="8" ref="5">
    <original>Y</original>
    <variation>C</variation>
    <location>
        <position position="260"/>
    </location>
</feature>
<feature type="sequence conflict" description="In Ref. 5; BAB85834." evidence="8" ref="5">
    <original>D</original>
    <variation>G</variation>
    <location>
        <position position="387"/>
    </location>
</feature>
<proteinExistence type="evidence at protein level"/>
<gene>
    <name evidence="11" type="primary">Slc8a2</name>
    <name evidence="7" type="synonym">Ncx2</name>
</gene>
<keyword id="KW-0025">Alternative splicing</keyword>
<keyword id="KW-0050">Antiport</keyword>
<keyword id="KW-0106">Calcium</keyword>
<keyword id="KW-0109">Calcium transport</keyword>
<keyword id="KW-0112">Calmodulin-binding</keyword>
<keyword id="KW-1003">Cell membrane</keyword>
<keyword id="KW-0325">Glycoprotein</keyword>
<keyword id="KW-0406">Ion transport</keyword>
<keyword id="KW-0472">Membrane</keyword>
<keyword id="KW-0479">Metal-binding</keyword>
<keyword id="KW-0597">Phosphoprotein</keyword>
<keyword id="KW-1185">Reference proteome</keyword>
<keyword id="KW-0677">Repeat</keyword>
<keyword id="KW-0732">Signal</keyword>
<keyword id="KW-0915">Sodium</keyword>
<keyword id="KW-0739">Sodium transport</keyword>
<keyword id="KW-0812">Transmembrane</keyword>
<keyword id="KW-1133">Transmembrane helix</keyword>
<keyword id="KW-0813">Transport</keyword>
<name>NAC2_MOUSE</name>
<protein>
    <recommendedName>
        <fullName>Sodium/calcium exchanger 2</fullName>
    </recommendedName>
    <alternativeName>
        <fullName>Na(+)/Ca(2+)-exchange protein 2</fullName>
    </alternativeName>
    <alternativeName>
        <fullName>Solute carrier family 8 member 2</fullName>
    </alternativeName>
</protein>